<comment type="function">
    <text evidence="1">The central subunit of the protein translocation channel SecYEG. Consists of two halves formed by TMs 1-5 and 6-10. These two domains form a lateral gate at the front which open onto the bilayer between TMs 2 and 7, and are clamped together by SecE at the back. The channel is closed by both a pore ring composed of hydrophobic SecY resides and a short helix (helix 2A) on the extracellular side of the membrane which forms a plug. The plug probably moves laterally to allow the channel to open. The ring and the pore may move independently.</text>
</comment>
<comment type="subunit">
    <text evidence="1">Component of the Sec protein translocase complex. Heterotrimer consisting of SecY, SecE and SecG subunits. The heterotrimers can form oligomers, although 1 heterotrimer is thought to be able to translocate proteins. Interacts with the ribosome. Interacts with SecDF, and other proteins may be involved. Interacts with SecA.</text>
</comment>
<comment type="subcellular location">
    <subcellularLocation>
        <location evidence="1">Cell membrane</location>
        <topology evidence="1">Multi-pass membrane protein</topology>
    </subcellularLocation>
</comment>
<comment type="similarity">
    <text evidence="1">Belongs to the SecY/SEC61-alpha family.</text>
</comment>
<sequence>MLSAFISSLRTVDLRRKILFTLGILVLYRVSAALPSPGVNYRHVQQCIQEATAGEAGEIYSLINLFSGGALLKLTVGVMPYITASIIVQLLTVVIPRFEELRKEGQAGQAKMTQYTRYLAIALAVLQATSIVALAANGGLLQGCQEDIISDQSIFSLVVIVLVMTGGAALVMWMGELITERGIGNGMSLLIFVGIAARIPAEGKQILDSRGGVIFAAVCLAALVIIVGVVFVEQGQRRIPVQYAKRMVGRRMYGGTSTYLPLKVNQAGVIPVIFASSLIYIPHLITQLVRSGSGGVGKSWWDKFVGTYLSDPADPVYINIYFGLIIFFTYFYVSVTFNPDERADEMKKFGGFIPGIRPGRPTADYLRYVLSRITLPGSIYLGAIAVLPNLFLQIGNGGEVQNLPFGGTAVLIMIGVGLDTVKQIESQLMQRNYEGFLK</sequence>
<accession>O33006</accession>
<keyword id="KW-1003">Cell membrane</keyword>
<keyword id="KW-0472">Membrane</keyword>
<keyword id="KW-0653">Protein transport</keyword>
<keyword id="KW-1185">Reference proteome</keyword>
<keyword id="KW-0811">Translocation</keyword>
<keyword id="KW-0812">Transmembrane</keyword>
<keyword id="KW-1133">Transmembrane helix</keyword>
<keyword id="KW-0813">Transport</keyword>
<protein>
    <recommendedName>
        <fullName evidence="1">Protein translocase subunit SecY</fullName>
    </recommendedName>
</protein>
<feature type="chain" id="PRO_0000131731" description="Protein translocase subunit SecY">
    <location>
        <begin position="1"/>
        <end position="438"/>
    </location>
</feature>
<feature type="transmembrane region" description="Helical" evidence="1">
    <location>
        <begin position="18"/>
        <end position="38"/>
    </location>
</feature>
<feature type="transmembrane region" description="Helical" evidence="1">
    <location>
        <begin position="76"/>
        <end position="96"/>
    </location>
</feature>
<feature type="transmembrane region" description="Helical" evidence="1">
    <location>
        <begin position="121"/>
        <end position="141"/>
    </location>
</feature>
<feature type="transmembrane region" description="Helical" evidence="1">
    <location>
        <begin position="154"/>
        <end position="174"/>
    </location>
</feature>
<feature type="transmembrane region" description="Helical" evidence="1">
    <location>
        <begin position="177"/>
        <end position="197"/>
    </location>
</feature>
<feature type="transmembrane region" description="Helical" evidence="1">
    <location>
        <begin position="212"/>
        <end position="232"/>
    </location>
</feature>
<feature type="transmembrane region" description="Helical" evidence="1">
    <location>
        <begin position="269"/>
        <end position="289"/>
    </location>
</feature>
<feature type="transmembrane region" description="Helical" evidence="1">
    <location>
        <begin position="315"/>
        <end position="335"/>
    </location>
</feature>
<feature type="transmembrane region" description="Helical" evidence="1">
    <location>
        <begin position="375"/>
        <end position="395"/>
    </location>
</feature>
<feature type="transmembrane region" description="Helical" evidence="1">
    <location>
        <begin position="398"/>
        <end position="418"/>
    </location>
</feature>
<dbReference type="EMBL" id="Z98756">
    <property type="protein sequence ID" value="CAB11459.1"/>
    <property type="molecule type" value="Genomic_DNA"/>
</dbReference>
<dbReference type="EMBL" id="AL583923">
    <property type="protein sequence ID" value="CAC30787.1"/>
    <property type="molecule type" value="Genomic_DNA"/>
</dbReference>
<dbReference type="PIR" id="T45389">
    <property type="entry name" value="T45389"/>
</dbReference>
<dbReference type="RefSeq" id="NP_302243.1">
    <property type="nucleotide sequence ID" value="NC_002677.1"/>
</dbReference>
<dbReference type="RefSeq" id="WP_010908564.1">
    <property type="nucleotide sequence ID" value="NC_002677.1"/>
</dbReference>
<dbReference type="SMR" id="O33006"/>
<dbReference type="STRING" id="272631.gene:17575681"/>
<dbReference type="KEGG" id="mle:ML1833"/>
<dbReference type="PATRIC" id="fig|272631.5.peg.3477"/>
<dbReference type="Leproma" id="ML1833"/>
<dbReference type="eggNOG" id="COG0201">
    <property type="taxonomic scope" value="Bacteria"/>
</dbReference>
<dbReference type="HOGENOM" id="CLU_030313_0_0_11"/>
<dbReference type="OrthoDB" id="9809248at2"/>
<dbReference type="Proteomes" id="UP000000806">
    <property type="component" value="Chromosome"/>
</dbReference>
<dbReference type="GO" id="GO:0005886">
    <property type="term" value="C:plasma membrane"/>
    <property type="evidence" value="ECO:0007669"/>
    <property type="project" value="UniProtKB-SubCell"/>
</dbReference>
<dbReference type="GO" id="GO:0065002">
    <property type="term" value="P:intracellular protein transmembrane transport"/>
    <property type="evidence" value="ECO:0007669"/>
    <property type="project" value="UniProtKB-UniRule"/>
</dbReference>
<dbReference type="GO" id="GO:0006605">
    <property type="term" value="P:protein targeting"/>
    <property type="evidence" value="ECO:0007669"/>
    <property type="project" value="UniProtKB-UniRule"/>
</dbReference>
<dbReference type="GO" id="GO:0043952">
    <property type="term" value="P:protein transport by the Sec complex"/>
    <property type="evidence" value="ECO:0007669"/>
    <property type="project" value="UniProtKB-UniRule"/>
</dbReference>
<dbReference type="FunFam" id="1.10.3370.10:FF:000001">
    <property type="entry name" value="Preprotein translocase subunit SecY"/>
    <property type="match status" value="1"/>
</dbReference>
<dbReference type="Gene3D" id="1.10.3370.10">
    <property type="entry name" value="SecY subunit domain"/>
    <property type="match status" value="1"/>
</dbReference>
<dbReference type="HAMAP" id="MF_01465">
    <property type="entry name" value="SecY"/>
    <property type="match status" value="1"/>
</dbReference>
<dbReference type="InterPro" id="IPR026593">
    <property type="entry name" value="SecY"/>
</dbReference>
<dbReference type="InterPro" id="IPR002208">
    <property type="entry name" value="SecY/SEC61-alpha"/>
</dbReference>
<dbReference type="InterPro" id="IPR030659">
    <property type="entry name" value="SecY_CS"/>
</dbReference>
<dbReference type="InterPro" id="IPR023201">
    <property type="entry name" value="SecY_dom_sf"/>
</dbReference>
<dbReference type="NCBIfam" id="TIGR00967">
    <property type="entry name" value="3a0501s007"/>
    <property type="match status" value="1"/>
</dbReference>
<dbReference type="PANTHER" id="PTHR10906">
    <property type="entry name" value="SECY/SEC61-ALPHA FAMILY MEMBER"/>
    <property type="match status" value="1"/>
</dbReference>
<dbReference type="Pfam" id="PF00344">
    <property type="entry name" value="SecY"/>
    <property type="match status" value="1"/>
</dbReference>
<dbReference type="PIRSF" id="PIRSF004557">
    <property type="entry name" value="SecY"/>
    <property type="match status" value="1"/>
</dbReference>
<dbReference type="PRINTS" id="PR00303">
    <property type="entry name" value="SECYTRNLCASE"/>
</dbReference>
<dbReference type="SUPFAM" id="SSF103491">
    <property type="entry name" value="Preprotein translocase SecY subunit"/>
    <property type="match status" value="1"/>
</dbReference>
<dbReference type="PROSITE" id="PS00755">
    <property type="entry name" value="SECY_1"/>
    <property type="match status" value="1"/>
</dbReference>
<dbReference type="PROSITE" id="PS00756">
    <property type="entry name" value="SECY_2"/>
    <property type="match status" value="1"/>
</dbReference>
<name>SECY_MYCLE</name>
<reference key="1">
    <citation type="journal article" date="2001" name="Nature">
        <title>Massive gene decay in the leprosy bacillus.</title>
        <authorList>
            <person name="Cole S.T."/>
            <person name="Eiglmeier K."/>
            <person name="Parkhill J."/>
            <person name="James K.D."/>
            <person name="Thomson N.R."/>
            <person name="Wheeler P.R."/>
            <person name="Honore N."/>
            <person name="Garnier T."/>
            <person name="Churcher C.M."/>
            <person name="Harris D.E."/>
            <person name="Mungall K.L."/>
            <person name="Basham D."/>
            <person name="Brown D."/>
            <person name="Chillingworth T."/>
            <person name="Connor R."/>
            <person name="Davies R.M."/>
            <person name="Devlin K."/>
            <person name="Duthoy S."/>
            <person name="Feltwell T."/>
            <person name="Fraser A."/>
            <person name="Hamlin N."/>
            <person name="Holroyd S."/>
            <person name="Hornsby T."/>
            <person name="Jagels K."/>
            <person name="Lacroix C."/>
            <person name="Maclean J."/>
            <person name="Moule S."/>
            <person name="Murphy L.D."/>
            <person name="Oliver K."/>
            <person name="Quail M.A."/>
            <person name="Rajandream M.A."/>
            <person name="Rutherford K.M."/>
            <person name="Rutter S."/>
            <person name="Seeger K."/>
            <person name="Simon S."/>
            <person name="Simmonds M."/>
            <person name="Skelton J."/>
            <person name="Squares R."/>
            <person name="Squares S."/>
            <person name="Stevens K."/>
            <person name="Taylor K."/>
            <person name="Whitehead S."/>
            <person name="Woodward J.R."/>
            <person name="Barrell B.G."/>
        </authorList>
    </citation>
    <scope>NUCLEOTIDE SEQUENCE [LARGE SCALE GENOMIC DNA]</scope>
    <source>
        <strain>TN</strain>
    </source>
</reference>
<proteinExistence type="inferred from homology"/>
<organism>
    <name type="scientific">Mycobacterium leprae (strain TN)</name>
    <dbReference type="NCBI Taxonomy" id="272631"/>
    <lineage>
        <taxon>Bacteria</taxon>
        <taxon>Bacillati</taxon>
        <taxon>Actinomycetota</taxon>
        <taxon>Actinomycetes</taxon>
        <taxon>Mycobacteriales</taxon>
        <taxon>Mycobacteriaceae</taxon>
        <taxon>Mycobacterium</taxon>
    </lineage>
</organism>
<evidence type="ECO:0000255" key="1">
    <source>
        <dbReference type="HAMAP-Rule" id="MF_01465"/>
    </source>
</evidence>
<gene>
    <name evidence="1" type="primary">secY</name>
    <name type="ordered locus">ML1833</name>
    <name type="ORF">MLCB2492.27</name>
</gene>